<name>APT_STRU0</name>
<evidence type="ECO:0000255" key="1">
    <source>
        <dbReference type="HAMAP-Rule" id="MF_00004"/>
    </source>
</evidence>
<keyword id="KW-0963">Cytoplasm</keyword>
<keyword id="KW-0328">Glycosyltransferase</keyword>
<keyword id="KW-0660">Purine salvage</keyword>
<keyword id="KW-1185">Reference proteome</keyword>
<keyword id="KW-0808">Transferase</keyword>
<organism>
    <name type="scientific">Streptococcus uberis (strain ATCC BAA-854 / 0140J)</name>
    <dbReference type="NCBI Taxonomy" id="218495"/>
    <lineage>
        <taxon>Bacteria</taxon>
        <taxon>Bacillati</taxon>
        <taxon>Bacillota</taxon>
        <taxon>Bacilli</taxon>
        <taxon>Lactobacillales</taxon>
        <taxon>Streptococcaceae</taxon>
        <taxon>Streptococcus</taxon>
    </lineage>
</organism>
<sequence>MNLTHYIASIENYPKEGITFRDISPLMADGKAYSYAIREICQYAADKEIDMIVGPEARGFIIGCPVAVELGIGFAPVRKPGKLPREVVSADYEKEYGLDTLTMHSDAIKPGQRVLIVDDLLATGGTVKATIEMVEKLGGVVAGCAFLIELDGLNGRQALGDIDYKVLMNFPG</sequence>
<protein>
    <recommendedName>
        <fullName evidence="1">Adenine phosphoribosyltransferase</fullName>
        <shortName evidence="1">APRT</shortName>
        <ecNumber evidence="1">2.4.2.7</ecNumber>
    </recommendedName>
</protein>
<comment type="function">
    <text evidence="1">Catalyzes a salvage reaction resulting in the formation of AMP, that is energically less costly than de novo synthesis.</text>
</comment>
<comment type="catalytic activity">
    <reaction evidence="1">
        <text>AMP + diphosphate = 5-phospho-alpha-D-ribose 1-diphosphate + adenine</text>
        <dbReference type="Rhea" id="RHEA:16609"/>
        <dbReference type="ChEBI" id="CHEBI:16708"/>
        <dbReference type="ChEBI" id="CHEBI:33019"/>
        <dbReference type="ChEBI" id="CHEBI:58017"/>
        <dbReference type="ChEBI" id="CHEBI:456215"/>
        <dbReference type="EC" id="2.4.2.7"/>
    </reaction>
</comment>
<comment type="pathway">
    <text evidence="1">Purine metabolism; AMP biosynthesis via salvage pathway; AMP from adenine: step 1/1.</text>
</comment>
<comment type="subunit">
    <text evidence="1">Homodimer.</text>
</comment>
<comment type="subcellular location">
    <subcellularLocation>
        <location evidence="1">Cytoplasm</location>
    </subcellularLocation>
</comment>
<comment type="similarity">
    <text evidence="1">Belongs to the purine/pyrimidine phosphoribosyltransferase family.</text>
</comment>
<proteinExistence type="inferred from homology"/>
<reference key="1">
    <citation type="journal article" date="2009" name="BMC Genomics">
        <title>Evidence for niche adaptation in the genome of the bovine pathogen Streptococcus uberis.</title>
        <authorList>
            <person name="Ward P.N."/>
            <person name="Holden M.T.G."/>
            <person name="Leigh J.A."/>
            <person name="Lennard N."/>
            <person name="Bignell A."/>
            <person name="Barron A."/>
            <person name="Clark L."/>
            <person name="Quail M.A."/>
            <person name="Woodward J."/>
            <person name="Barrell B.G."/>
            <person name="Egan S.A."/>
            <person name="Field T.R."/>
            <person name="Maskell D."/>
            <person name="Kehoe M."/>
            <person name="Dowson C.G."/>
            <person name="Chanter N."/>
            <person name="Whatmore A.M."/>
            <person name="Bentley S.D."/>
            <person name="Parkhill J."/>
        </authorList>
    </citation>
    <scope>NUCLEOTIDE SEQUENCE [LARGE SCALE GENOMIC DNA]</scope>
    <source>
        <strain>ATCC BAA-854 / 0140J</strain>
    </source>
</reference>
<dbReference type="EC" id="2.4.2.7" evidence="1"/>
<dbReference type="EMBL" id="AM946015">
    <property type="protein sequence ID" value="CAR42493.1"/>
    <property type="molecule type" value="Genomic_DNA"/>
</dbReference>
<dbReference type="RefSeq" id="WP_012658615.1">
    <property type="nucleotide sequence ID" value="NC_012004.1"/>
</dbReference>
<dbReference type="SMR" id="B9DUP2"/>
<dbReference type="STRING" id="218495.SUB1128"/>
<dbReference type="KEGG" id="sub:SUB1128"/>
<dbReference type="eggNOG" id="COG0503">
    <property type="taxonomic scope" value="Bacteria"/>
</dbReference>
<dbReference type="HOGENOM" id="CLU_063339_3_0_9"/>
<dbReference type="OrthoDB" id="9803963at2"/>
<dbReference type="UniPathway" id="UPA00588">
    <property type="reaction ID" value="UER00646"/>
</dbReference>
<dbReference type="Proteomes" id="UP000000449">
    <property type="component" value="Chromosome"/>
</dbReference>
<dbReference type="GO" id="GO:0005737">
    <property type="term" value="C:cytoplasm"/>
    <property type="evidence" value="ECO:0007669"/>
    <property type="project" value="UniProtKB-SubCell"/>
</dbReference>
<dbReference type="GO" id="GO:0002055">
    <property type="term" value="F:adenine binding"/>
    <property type="evidence" value="ECO:0007669"/>
    <property type="project" value="TreeGrafter"/>
</dbReference>
<dbReference type="GO" id="GO:0003999">
    <property type="term" value="F:adenine phosphoribosyltransferase activity"/>
    <property type="evidence" value="ECO:0007669"/>
    <property type="project" value="UniProtKB-UniRule"/>
</dbReference>
<dbReference type="GO" id="GO:0016208">
    <property type="term" value="F:AMP binding"/>
    <property type="evidence" value="ECO:0007669"/>
    <property type="project" value="TreeGrafter"/>
</dbReference>
<dbReference type="GO" id="GO:0006168">
    <property type="term" value="P:adenine salvage"/>
    <property type="evidence" value="ECO:0007669"/>
    <property type="project" value="InterPro"/>
</dbReference>
<dbReference type="GO" id="GO:0044209">
    <property type="term" value="P:AMP salvage"/>
    <property type="evidence" value="ECO:0007669"/>
    <property type="project" value="UniProtKB-UniRule"/>
</dbReference>
<dbReference type="GO" id="GO:0006166">
    <property type="term" value="P:purine ribonucleoside salvage"/>
    <property type="evidence" value="ECO:0007669"/>
    <property type="project" value="UniProtKB-KW"/>
</dbReference>
<dbReference type="CDD" id="cd06223">
    <property type="entry name" value="PRTases_typeI"/>
    <property type="match status" value="1"/>
</dbReference>
<dbReference type="FunFam" id="3.40.50.2020:FF:000004">
    <property type="entry name" value="Adenine phosphoribosyltransferase"/>
    <property type="match status" value="1"/>
</dbReference>
<dbReference type="Gene3D" id="3.40.50.2020">
    <property type="match status" value="1"/>
</dbReference>
<dbReference type="HAMAP" id="MF_00004">
    <property type="entry name" value="Aden_phosphoribosyltr"/>
    <property type="match status" value="1"/>
</dbReference>
<dbReference type="InterPro" id="IPR005764">
    <property type="entry name" value="Ade_phspho_trans"/>
</dbReference>
<dbReference type="InterPro" id="IPR000836">
    <property type="entry name" value="PRibTrfase_dom"/>
</dbReference>
<dbReference type="InterPro" id="IPR029057">
    <property type="entry name" value="PRTase-like"/>
</dbReference>
<dbReference type="InterPro" id="IPR050054">
    <property type="entry name" value="UPRTase/APRTase"/>
</dbReference>
<dbReference type="NCBIfam" id="TIGR01090">
    <property type="entry name" value="apt"/>
    <property type="match status" value="1"/>
</dbReference>
<dbReference type="NCBIfam" id="NF002633">
    <property type="entry name" value="PRK02304.1-2"/>
    <property type="match status" value="1"/>
</dbReference>
<dbReference type="NCBIfam" id="NF002634">
    <property type="entry name" value="PRK02304.1-3"/>
    <property type="match status" value="1"/>
</dbReference>
<dbReference type="NCBIfam" id="NF002636">
    <property type="entry name" value="PRK02304.1-5"/>
    <property type="match status" value="1"/>
</dbReference>
<dbReference type="PANTHER" id="PTHR32315">
    <property type="entry name" value="ADENINE PHOSPHORIBOSYLTRANSFERASE"/>
    <property type="match status" value="1"/>
</dbReference>
<dbReference type="PANTHER" id="PTHR32315:SF3">
    <property type="entry name" value="ADENINE PHOSPHORIBOSYLTRANSFERASE"/>
    <property type="match status" value="1"/>
</dbReference>
<dbReference type="Pfam" id="PF00156">
    <property type="entry name" value="Pribosyltran"/>
    <property type="match status" value="1"/>
</dbReference>
<dbReference type="SUPFAM" id="SSF53271">
    <property type="entry name" value="PRTase-like"/>
    <property type="match status" value="1"/>
</dbReference>
<dbReference type="PROSITE" id="PS00103">
    <property type="entry name" value="PUR_PYR_PR_TRANSFER"/>
    <property type="match status" value="1"/>
</dbReference>
<feature type="chain" id="PRO_1000116260" description="Adenine phosphoribosyltransferase">
    <location>
        <begin position="1"/>
        <end position="172"/>
    </location>
</feature>
<gene>
    <name evidence="1" type="primary">apt</name>
    <name type="ordered locus">SUB1128</name>
</gene>
<accession>B9DUP2</accession>